<reference evidence="7" key="1">
    <citation type="submission" date="2003-11" db="EMBL/GenBank/DDBJ databases">
        <title>CCAP cDNA of Periplaneta americana.</title>
        <authorList>
            <person name="Sakai T."/>
            <person name="Satake H."/>
            <person name="Minakata H."/>
            <person name="Takeda M."/>
        </authorList>
    </citation>
    <scope>NUCLEOTIDE SEQUENCE [MRNA]</scope>
    <source>
        <tissue>Ventral nerve cord</tissue>
    </source>
</reference>
<reference evidence="6" key="2">
    <citation type="journal article" date="2002" name="J. Comp. Neurol.">
        <title>Cellular localization of bursicon using antisera against partial peptide sequences of this insect cuticle-sclerotizing neurohormone.</title>
        <authorList>
            <person name="Honegger H.W."/>
            <person name="Market D."/>
            <person name="Pierce L.A."/>
            <person name="Dewey E.M."/>
            <person name="Kostron B."/>
            <person name="Wilson M."/>
            <person name="Choi D."/>
            <person name="Klukas K.A."/>
            <person name="Mesce K.A."/>
        </authorList>
    </citation>
    <scope>TISSUE SPECIFICITY</scope>
    <source>
        <tissue evidence="5">Ventral nerve cord</tissue>
    </source>
</reference>
<accession>Q75UG5</accession>
<feature type="signal peptide" evidence="3">
    <location>
        <begin position="1"/>
        <end position="26"/>
    </location>
</feature>
<feature type="propeptide" id="PRO_0000020857" evidence="2 3">
    <location>
        <begin position="27"/>
        <end position="49"/>
    </location>
</feature>
<feature type="peptide" id="PRO_0000020858" description="Cardioactive peptide" evidence="2">
    <location>
        <begin position="52"/>
        <end position="60"/>
    </location>
</feature>
<feature type="propeptide" id="PRO_0000020859" evidence="2">
    <location>
        <begin position="64"/>
        <end position="171"/>
    </location>
</feature>
<feature type="region of interest" description="Disordered" evidence="4">
    <location>
        <begin position="116"/>
        <end position="171"/>
    </location>
</feature>
<feature type="modified residue" description="Cysteine amide" evidence="1">
    <location>
        <position position="60"/>
    </location>
</feature>
<feature type="disulfide bond" evidence="2">
    <location>
        <begin position="54"/>
        <end position="60"/>
    </location>
</feature>
<dbReference type="EMBL" id="AB126034">
    <property type="protein sequence ID" value="BAD18887.1"/>
    <property type="molecule type" value="mRNA"/>
</dbReference>
<dbReference type="SMR" id="Q75UG5"/>
<dbReference type="BRENDA" id="3.2.1.1">
    <property type="organism ID" value="4685"/>
</dbReference>
<dbReference type="GO" id="GO:0005576">
    <property type="term" value="C:extracellular region"/>
    <property type="evidence" value="ECO:0007669"/>
    <property type="project" value="UniProtKB-SubCell"/>
</dbReference>
<dbReference type="GO" id="GO:0005179">
    <property type="term" value="F:hormone activity"/>
    <property type="evidence" value="ECO:0007669"/>
    <property type="project" value="UniProtKB-KW"/>
</dbReference>
<dbReference type="GO" id="GO:0007218">
    <property type="term" value="P:neuropeptide signaling pathway"/>
    <property type="evidence" value="ECO:0007669"/>
    <property type="project" value="UniProtKB-KW"/>
</dbReference>
<dbReference type="InterPro" id="IPR024276">
    <property type="entry name" value="CCAP"/>
</dbReference>
<dbReference type="Pfam" id="PF11105">
    <property type="entry name" value="CCAP"/>
    <property type="match status" value="2"/>
</dbReference>
<sequence>MQMYHVVLGCSLAILLVILDIPQASCDDVVIQKRQVDPAEMDRLLDPKRKRPFCNAFTGCGKKRSDESMGTLVEMNSEPAVDDLSRQILSEVKLWEAIQEARVELLRRRQEQLQQQSNQFGAGMDRPLPLPIAGYRRKRFADPESQAPAPHSNLPRATSQLQEEITKPWSR</sequence>
<protein>
    <recommendedName>
        <fullName>Cardioactive peptide</fullName>
    </recommendedName>
    <alternativeName>
        <fullName>Cardioacceleratory peptide 2a</fullName>
    </alternativeName>
    <alternativeName>
        <fullName>Crustacean cardioactive peptide</fullName>
        <shortName>CCAP</shortName>
    </alternativeName>
</protein>
<evidence type="ECO:0000250" key="1"/>
<evidence type="ECO:0000250" key="2">
    <source>
        <dbReference type="UniProtKB" id="Q8WRC7"/>
    </source>
</evidence>
<evidence type="ECO:0000255" key="3"/>
<evidence type="ECO:0000256" key="4">
    <source>
        <dbReference type="SAM" id="MobiDB-lite"/>
    </source>
</evidence>
<evidence type="ECO:0000269" key="5">
    <source>
    </source>
</evidence>
<evidence type="ECO:0000305" key="6"/>
<evidence type="ECO:0000312" key="7">
    <source>
        <dbReference type="EMBL" id="BAD18887.1"/>
    </source>
</evidence>
<gene>
    <name evidence="7" type="primary">CCAP</name>
</gene>
<keyword id="KW-0027">Amidation</keyword>
<keyword id="KW-0165">Cleavage on pair of basic residues</keyword>
<keyword id="KW-1015">Disulfide bond</keyword>
<keyword id="KW-0372">Hormone</keyword>
<keyword id="KW-0527">Neuropeptide</keyword>
<keyword id="KW-0964">Secreted</keyword>
<keyword id="KW-0732">Signal</keyword>
<comment type="function">
    <text evidence="2">Cardioregulatory neurohormone that increases heart beat rate during adult wing inflation; has no effect on beat amplitude. The effect of CCAP is both ino- and chronotropic (By similarity).</text>
</comment>
<comment type="subcellular location">
    <subcellularLocation>
        <location evidence="2">Secreted</location>
    </subcellularLocation>
</comment>
<comment type="tissue specificity">
    <text evidence="5">Central nervous system; most neurons exhibit coexpression with burs.</text>
</comment>
<organism>
    <name type="scientific">Periplaneta americana</name>
    <name type="common">American cockroach</name>
    <name type="synonym">Blatta americana</name>
    <dbReference type="NCBI Taxonomy" id="6978"/>
    <lineage>
        <taxon>Eukaryota</taxon>
        <taxon>Metazoa</taxon>
        <taxon>Ecdysozoa</taxon>
        <taxon>Arthropoda</taxon>
        <taxon>Hexapoda</taxon>
        <taxon>Insecta</taxon>
        <taxon>Pterygota</taxon>
        <taxon>Neoptera</taxon>
        <taxon>Polyneoptera</taxon>
        <taxon>Dictyoptera</taxon>
        <taxon>Blattodea</taxon>
        <taxon>Blattoidea</taxon>
        <taxon>Blattidae</taxon>
        <taxon>Blattinae</taxon>
        <taxon>Periplaneta</taxon>
    </lineage>
</organism>
<name>CCAP_PERAM</name>
<proteinExistence type="evidence at transcript level"/>